<protein>
    <recommendedName>
        <fullName>Probable Ufm1-specific protease</fullName>
        <shortName>UfSP</shortName>
        <ecNumber>3.4.22.-</ecNumber>
    </recommendedName>
</protein>
<proteinExistence type="evidence at transcript level"/>
<name>UFSP_ORYSJ</name>
<evidence type="ECO:0000250" key="1"/>
<evidence type="ECO:0000305" key="2"/>
<reference key="1">
    <citation type="journal article" date="2005" name="BMC Biol.">
        <title>The sequence of rice chromosomes 11 and 12, rich in disease resistance genes and recent gene duplications.</title>
        <authorList>
            <consortium name="The rice chromosomes 11 and 12 sequencing consortia"/>
        </authorList>
    </citation>
    <scope>NUCLEOTIDE SEQUENCE [LARGE SCALE GENOMIC DNA]</scope>
    <source>
        <strain>cv. Nipponbare</strain>
    </source>
</reference>
<reference key="2">
    <citation type="journal article" date="2005" name="Nature">
        <title>The map-based sequence of the rice genome.</title>
        <authorList>
            <consortium name="International rice genome sequencing project (IRGSP)"/>
        </authorList>
    </citation>
    <scope>NUCLEOTIDE SEQUENCE [LARGE SCALE GENOMIC DNA]</scope>
    <source>
        <strain>cv. Nipponbare</strain>
    </source>
</reference>
<reference key="3">
    <citation type="journal article" date="2008" name="Nucleic Acids Res.">
        <title>The rice annotation project database (RAP-DB): 2008 update.</title>
        <authorList>
            <consortium name="The rice annotation project (RAP)"/>
        </authorList>
    </citation>
    <scope>GENOME REANNOTATION</scope>
    <source>
        <strain>cv. Nipponbare</strain>
    </source>
</reference>
<reference key="4">
    <citation type="journal article" date="2013" name="Rice">
        <title>Improvement of the Oryza sativa Nipponbare reference genome using next generation sequence and optical map data.</title>
        <authorList>
            <person name="Kawahara Y."/>
            <person name="de la Bastide M."/>
            <person name="Hamilton J.P."/>
            <person name="Kanamori H."/>
            <person name="McCombie W.R."/>
            <person name="Ouyang S."/>
            <person name="Schwartz D.C."/>
            <person name="Tanaka T."/>
            <person name="Wu J."/>
            <person name="Zhou S."/>
            <person name="Childs K.L."/>
            <person name="Davidson R.M."/>
            <person name="Lin H."/>
            <person name="Quesada-Ocampo L."/>
            <person name="Vaillancourt B."/>
            <person name="Sakai H."/>
            <person name="Lee S.S."/>
            <person name="Kim J."/>
            <person name="Numa H."/>
            <person name="Itoh T."/>
            <person name="Buell C.R."/>
            <person name="Matsumoto T."/>
        </authorList>
    </citation>
    <scope>GENOME REANNOTATION</scope>
    <source>
        <strain>cv. Nipponbare</strain>
    </source>
</reference>
<reference key="5">
    <citation type="submission" date="2006-10" db="EMBL/GenBank/DDBJ databases">
        <title>Oryza sativa full length cDNA.</title>
        <authorList>
            <consortium name="The rice full-length cDNA consortium"/>
        </authorList>
    </citation>
    <scope>NUCLEOTIDE SEQUENCE [LARGE SCALE MRNA]</scope>
    <source>
        <strain>cv. Nipponbare</strain>
    </source>
</reference>
<keyword id="KW-0378">Hydrolase</keyword>
<keyword id="KW-0645">Protease</keyword>
<keyword id="KW-1185">Reference proteome</keyword>
<keyword id="KW-0788">Thiol protease</keyword>
<keyword id="KW-0833">Ubl conjugation pathway</keyword>
<sequence length="640" mass="70266">MEATAGGSRRRPTLLRLLCPKKSLVSPPTPSLRWLLGSPRFLPPLTVAAALRSLPDGASSPDLQREAEEIRGLLVRGFDIVGAVHVGSADAGGALELARAVRERLYGERASHGMVGGCVELGTGEIRFVVSEGDGVEAVEVTEVVWEDDPGRLLWEKGCLLRCELLLKLPLYVPSDDTSGIEARFYSLIESTASKLRDPHVSYLIEGPRTTPGESHYSIILHGNDLNSVPHLSRNGSTEEYDANIVSCSKFFPAKRSLSLTRENADAIQITILSNQSFNSSKASTPAVEYFPAPALASLRAINLKLDILCYTSVDFPVAAAVSELVIPGLADQLSIMKKAIVSELTTQQPQLSPYHFVPPGLLIPVTTIYDTRYGEIEEKQSELRRNLHLRLQLPLDRPLLRISNALNFSIGGTDKKASKSGSSLLRDVHREIPSSGVSGGIISLIDGSYEYYHYLHDGIDDNGWGCAYRSLQTIMSWYRLQQYSSINVPSHREIQQVLVEIGDKDPSFIGSREWIGAIELSFVLDKLLGVSCKVINVRSGDELPEKCRELAIHFETQGTPVMIGGGVLAYTLLGVDYNESSGDCAFLILDPHYTGADDLKKIVNGGWCGWKKSIDSKGRSFFLKDKFYNLLLPQRPNMV</sequence>
<gene>
    <name type="ordered locus">Os12g0285500</name>
    <name type="ordered locus">LOC_Os12g18760</name>
</gene>
<comment type="function">
    <text evidence="1">Thiol protease which recognizes and hydrolyzes the peptide bond at the C-terminal Gly of ufm-1, a ubiquitin-like modifier protein bound to a number of target proteins.</text>
</comment>
<comment type="similarity">
    <text evidence="2">Belongs to the peptidase C78 family.</text>
</comment>
<comment type="sequence caution" evidence="2">
    <conflict type="erroneous gene model prediction">
        <sequence resource="EMBL-CDS" id="ABA97481"/>
    </conflict>
</comment>
<comment type="sequence caution" evidence="2">
    <conflict type="erroneous gene model prediction">
        <sequence resource="EMBL-CDS" id="BAF29604"/>
    </conflict>
</comment>
<dbReference type="EC" id="3.4.22.-"/>
<dbReference type="EMBL" id="DP000011">
    <property type="protein sequence ID" value="ABA97481.1"/>
    <property type="status" value="ALT_SEQ"/>
    <property type="molecule type" value="Genomic_DNA"/>
</dbReference>
<dbReference type="EMBL" id="AP008218">
    <property type="protein sequence ID" value="BAF29604.2"/>
    <property type="status" value="ALT_SEQ"/>
    <property type="molecule type" value="Genomic_DNA"/>
</dbReference>
<dbReference type="EMBL" id="AP014968">
    <property type="protein sequence ID" value="BAT16745.1"/>
    <property type="molecule type" value="Genomic_DNA"/>
</dbReference>
<dbReference type="EMBL" id="AK243515">
    <property type="status" value="NOT_ANNOTATED_CDS"/>
    <property type="molecule type" value="mRNA"/>
</dbReference>
<dbReference type="RefSeq" id="XP_015620793.1">
    <property type="nucleotide sequence ID" value="XM_015765307.1"/>
</dbReference>
<dbReference type="SMR" id="Q0INW1"/>
<dbReference type="FunCoup" id="Q0INW1">
    <property type="interactions" value="1465"/>
</dbReference>
<dbReference type="STRING" id="39947.Q0INW1"/>
<dbReference type="MEROPS" id="C78.A02"/>
<dbReference type="iPTMnet" id="Q0INW1"/>
<dbReference type="PaxDb" id="39947-Q0INW1"/>
<dbReference type="EnsemblPlants" id="Os12t0285500-01">
    <property type="protein sequence ID" value="Os12t0285500-01"/>
    <property type="gene ID" value="Os12g0285500"/>
</dbReference>
<dbReference type="Gramene" id="Os12t0285500-01">
    <property type="protein sequence ID" value="Os12t0285500-01"/>
    <property type="gene ID" value="Os12g0285500"/>
</dbReference>
<dbReference type="KEGG" id="dosa:Os12g0285500"/>
<dbReference type="eggNOG" id="KOG2433">
    <property type="taxonomic scope" value="Eukaryota"/>
</dbReference>
<dbReference type="HOGENOM" id="CLU_021066_2_1_1"/>
<dbReference type="InParanoid" id="Q0INW1"/>
<dbReference type="OMA" id="VSCSKFF"/>
<dbReference type="OrthoDB" id="417506at2759"/>
<dbReference type="Proteomes" id="UP000000763">
    <property type="component" value="Chromosome 12"/>
</dbReference>
<dbReference type="Proteomes" id="UP000059680">
    <property type="component" value="Chromosome 12"/>
</dbReference>
<dbReference type="GO" id="GO:0071567">
    <property type="term" value="F:deUFMylase activity"/>
    <property type="evidence" value="ECO:0000318"/>
    <property type="project" value="GO_Central"/>
</dbReference>
<dbReference type="GO" id="GO:0006508">
    <property type="term" value="P:proteolysis"/>
    <property type="evidence" value="ECO:0007669"/>
    <property type="project" value="UniProtKB-KW"/>
</dbReference>
<dbReference type="FunFam" id="3.90.70.130:FF:000001">
    <property type="entry name" value="Probable Ufm1-specific protease 2"/>
    <property type="match status" value="1"/>
</dbReference>
<dbReference type="Gene3D" id="3.90.70.130">
    <property type="match status" value="1"/>
</dbReference>
<dbReference type="InterPro" id="IPR038765">
    <property type="entry name" value="Papain-like_cys_pep_sf"/>
</dbReference>
<dbReference type="InterPro" id="IPR012462">
    <property type="entry name" value="UfSP1/2_DUB_cat"/>
</dbReference>
<dbReference type="InterPro" id="IPR049387">
    <property type="entry name" value="UfSP2-like_N"/>
</dbReference>
<dbReference type="PANTHER" id="PTHR48153">
    <property type="entry name" value="UFM1-SPECIFIC PROTEASE 2"/>
    <property type="match status" value="1"/>
</dbReference>
<dbReference type="PANTHER" id="PTHR48153:SF2">
    <property type="entry name" value="UFM1-SPECIFIC PROTEASE 2"/>
    <property type="match status" value="1"/>
</dbReference>
<dbReference type="Pfam" id="PF07910">
    <property type="entry name" value="Peptidase_C78"/>
    <property type="match status" value="1"/>
</dbReference>
<dbReference type="Pfam" id="PF20908">
    <property type="entry name" value="UfSP2_N"/>
    <property type="match status" value="1"/>
</dbReference>
<dbReference type="SUPFAM" id="SSF54001">
    <property type="entry name" value="Cysteine proteinases"/>
    <property type="match status" value="1"/>
</dbReference>
<organism>
    <name type="scientific">Oryza sativa subsp. japonica</name>
    <name type="common">Rice</name>
    <dbReference type="NCBI Taxonomy" id="39947"/>
    <lineage>
        <taxon>Eukaryota</taxon>
        <taxon>Viridiplantae</taxon>
        <taxon>Streptophyta</taxon>
        <taxon>Embryophyta</taxon>
        <taxon>Tracheophyta</taxon>
        <taxon>Spermatophyta</taxon>
        <taxon>Magnoliopsida</taxon>
        <taxon>Liliopsida</taxon>
        <taxon>Poales</taxon>
        <taxon>Poaceae</taxon>
        <taxon>BOP clade</taxon>
        <taxon>Oryzoideae</taxon>
        <taxon>Oryzeae</taxon>
        <taxon>Oryzinae</taxon>
        <taxon>Oryza</taxon>
        <taxon>Oryza sativa</taxon>
    </lineage>
</organism>
<accession>Q0INW1</accession>
<accession>A0A0P0Y940</accession>
<accession>Q2QTR5</accession>
<feature type="chain" id="PRO_0000280375" description="Probable Ufm1-specific protease">
    <location>
        <begin position="1"/>
        <end position="640"/>
    </location>
</feature>
<feature type="active site" evidence="1">
    <location>
        <position position="467"/>
    </location>
</feature>
<feature type="active site" evidence="1">
    <location>
        <position position="591"/>
    </location>
</feature>
<feature type="active site" evidence="1">
    <location>
        <position position="593"/>
    </location>
</feature>